<feature type="initiator methionine" description="Removed" evidence="7">
    <location>
        <position position="1"/>
    </location>
</feature>
<feature type="chain" id="PRO_0000211406" description="ER membrane protein complex subunit 3">
    <location>
        <begin position="2"/>
        <end position="261"/>
    </location>
</feature>
<feature type="topological domain" description="Lumenal" evidence="5">
    <location>
        <begin position="2"/>
        <end position="14"/>
    </location>
</feature>
<feature type="transmembrane region" description="Helical" evidence="5">
    <location>
        <begin position="15"/>
        <end position="38"/>
    </location>
</feature>
<feature type="topological domain" description="Cytoplasmic" evidence="5">
    <location>
        <begin position="39"/>
        <end position="114"/>
    </location>
</feature>
<feature type="transmembrane region" description="Helical" evidence="5">
    <location>
        <begin position="115"/>
        <end position="130"/>
    </location>
</feature>
<feature type="topological domain" description="Lumenal" evidence="5">
    <location>
        <begin position="131"/>
        <end position="168"/>
    </location>
</feature>
<feature type="transmembrane region" description="Helical" evidence="5">
    <location>
        <begin position="169"/>
        <end position="187"/>
    </location>
</feature>
<feature type="topological domain" description="Cytoplasmic" evidence="5">
    <location>
        <begin position="188"/>
        <end position="261"/>
    </location>
</feature>
<feature type="splice variant" id="VSP_014886" description="In isoform 2." evidence="8">
    <location>
        <begin position="220"/>
        <end position="261"/>
    </location>
</feature>
<feature type="mutagenesis site" description="No effect on EMC assembly but decreased membrane insertion of hydrophobic transmembrane helices-containing proteins by the EMC." evidence="5">
    <original>R</original>
    <variation>A</variation>
    <variation>E</variation>
    <location>
        <position position="31"/>
    </location>
</feature>
<feature type="mutagenesis site" description="No effect on EMC assembly and no effect on membrane insertion of hydrophobic transmembrane helices-containing proteins by the EMC." evidence="5">
    <original>R</original>
    <variation>K</variation>
    <location>
        <position position="31"/>
    </location>
</feature>
<feature type="mutagenesis site" description="No effect on EMC assembly but decreased membrane insertion of hydrophobic transmembrane helices-containing proteins by the EMC; when associated S-106, S-110 and S-111." evidence="5">
    <original>M</original>
    <variation>S</variation>
    <location>
        <position position="101"/>
    </location>
</feature>
<feature type="mutagenesis site" description="No effect on EMC assembly but decreased membrane insertion of hydrophobic transmembrane helices-containing proteins by the EMC; when associated S-101, S-110 and S-111." evidence="5">
    <original>M</original>
    <variation>S</variation>
    <location>
        <position position="106"/>
    </location>
</feature>
<feature type="mutagenesis site" description="No effect on EMC assembly but decreased membrane insertion of hydrophobic transmembrane helices-containing proteins by the EMC; when associated S-101, S-106 and S-111." evidence="5">
    <original>M</original>
    <variation>S</variation>
    <location>
        <position position="110"/>
    </location>
</feature>
<feature type="mutagenesis site" description="No effect on EMC assembly but decreased membrane insertion of hydrophobic transmembrane helices-containing proteins by the EMC; when associated S-101, S-106 and S-110." evidence="5">
    <original>M</original>
    <variation>S</variation>
    <location>
        <position position="111"/>
    </location>
</feature>
<feature type="mutagenesis site" description="No effect on EMC assembly and no effect on membrane insertion of hydrophobic transmembrane helices-containing proteins by the EMC." evidence="5">
    <original>F</original>
    <variation>A</variation>
    <location>
        <position position="173"/>
    </location>
</feature>
<feature type="mutagenesis site" description="No effect on EMC assembly but decreased membrane insertion of hydrophobic transmembrane helices-containing proteins by the EMC." evidence="5">
    <original>R</original>
    <variation>A</variation>
    <variation>E</variation>
    <location>
        <position position="180"/>
    </location>
</feature>
<feature type="mutagenesis site" description="No effect on EMC assembly and no effect on membrane insertion of hydrophobic transmembrane helices-containing proteins by the EMC." evidence="5">
    <original>R</original>
    <variation>K</variation>
    <location>
        <position position="180"/>
    </location>
</feature>
<feature type="sequence conflict" description="In Ref. 2; BAD18807." evidence="9" ref="2">
    <original>M</original>
    <variation>T</variation>
    <location>
        <position position="29"/>
    </location>
</feature>
<feature type="sequence conflict" description="In Ref. 3; BAD96673." evidence="9" ref="3">
    <original>V</original>
    <variation>I</variation>
    <location>
        <position position="60"/>
    </location>
</feature>
<feature type="sequence conflict" description="In Ref. 2; BAD18807." evidence="9" ref="2">
    <original>Y</original>
    <variation>H</variation>
    <location>
        <position position="172"/>
    </location>
</feature>
<feature type="sequence conflict" description="In Ref. 2; BAD18807." evidence="9" ref="2">
    <original>G</original>
    <variation>D</variation>
    <location>
        <position position="250"/>
    </location>
</feature>
<feature type="helix" evidence="14">
    <location>
        <begin position="11"/>
        <end position="14"/>
    </location>
</feature>
<feature type="helix" evidence="14">
    <location>
        <begin position="17"/>
        <end position="38"/>
    </location>
</feature>
<feature type="helix" evidence="14">
    <location>
        <begin position="46"/>
        <end position="63"/>
    </location>
</feature>
<feature type="strand" evidence="14">
    <location>
        <begin position="66"/>
        <end position="68"/>
    </location>
</feature>
<feature type="helix" evidence="14">
    <location>
        <begin position="70"/>
        <end position="81"/>
    </location>
</feature>
<feature type="strand" evidence="14">
    <location>
        <begin position="83"/>
        <end position="85"/>
    </location>
</feature>
<feature type="helix" evidence="14">
    <location>
        <begin position="87"/>
        <end position="90"/>
    </location>
</feature>
<feature type="helix" evidence="14">
    <location>
        <begin position="102"/>
        <end position="112"/>
    </location>
</feature>
<feature type="helix" evidence="14">
    <location>
        <begin position="119"/>
        <end position="131"/>
    </location>
</feature>
<feature type="helix" evidence="14">
    <location>
        <begin position="146"/>
        <end position="148"/>
    </location>
</feature>
<feature type="helix" evidence="14">
    <location>
        <begin position="149"/>
        <end position="152"/>
    </location>
</feature>
<feature type="strand" evidence="13">
    <location>
        <begin position="153"/>
        <end position="155"/>
    </location>
</feature>
<feature type="strand" evidence="14">
    <location>
        <begin position="159"/>
        <end position="161"/>
    </location>
</feature>
<feature type="strand" evidence="12">
    <location>
        <begin position="163"/>
        <end position="166"/>
    </location>
</feature>
<feature type="helix" evidence="14">
    <location>
        <begin position="168"/>
        <end position="178"/>
    </location>
</feature>
<feature type="helix" evidence="14">
    <location>
        <begin position="180"/>
        <end position="187"/>
    </location>
</feature>
<feature type="strand" evidence="14">
    <location>
        <begin position="198"/>
        <end position="200"/>
    </location>
</feature>
<feature type="helix" evidence="14">
    <location>
        <begin position="214"/>
        <end position="227"/>
    </location>
</feature>
<feature type="helix" evidence="14">
    <location>
        <begin position="238"/>
        <end position="241"/>
    </location>
</feature>
<feature type="helix" evidence="14">
    <location>
        <begin position="250"/>
        <end position="256"/>
    </location>
</feature>
<gene>
    <name type="primary">EMC3</name>
    <name type="synonym">TMEM111</name>
</gene>
<keyword id="KW-0002">3D-structure</keyword>
<keyword id="KW-0025">Alternative splicing</keyword>
<keyword id="KW-0903">Direct protein sequencing</keyword>
<keyword id="KW-0256">Endoplasmic reticulum</keyword>
<keyword id="KW-0472">Membrane</keyword>
<keyword id="KW-1267">Proteomics identification</keyword>
<keyword id="KW-1185">Reference proteome</keyword>
<keyword id="KW-0812">Transmembrane</keyword>
<keyword id="KW-1133">Transmembrane helix</keyword>
<evidence type="ECO:0000269" key="1">
    <source>
    </source>
</evidence>
<evidence type="ECO:0000269" key="2">
    <source>
    </source>
</evidence>
<evidence type="ECO:0000269" key="3">
    <source>
    </source>
</evidence>
<evidence type="ECO:0000269" key="4">
    <source>
    </source>
</evidence>
<evidence type="ECO:0000269" key="5">
    <source>
    </source>
</evidence>
<evidence type="ECO:0000269" key="6">
    <source>
    </source>
</evidence>
<evidence type="ECO:0000269" key="7">
    <source ref="6"/>
</evidence>
<evidence type="ECO:0000303" key="8">
    <source ref="3"/>
</evidence>
<evidence type="ECO:0000305" key="9"/>
<evidence type="ECO:0007744" key="10">
    <source>
        <dbReference type="PDB" id="6WW7"/>
    </source>
</evidence>
<evidence type="ECO:0007744" key="11">
    <source>
        <dbReference type="PDB" id="6Z3W"/>
    </source>
</evidence>
<evidence type="ECO:0007829" key="12">
    <source>
        <dbReference type="PDB" id="6WW7"/>
    </source>
</evidence>
<evidence type="ECO:0007829" key="13">
    <source>
        <dbReference type="PDB" id="7ADO"/>
    </source>
</evidence>
<evidence type="ECO:0007829" key="14">
    <source>
        <dbReference type="PDB" id="8J0O"/>
    </source>
</evidence>
<name>EMC3_HUMAN</name>
<proteinExistence type="evidence at protein level"/>
<accession>Q9P0I2</accession>
<accession>B2R4Z9</accession>
<accession>Q53GH8</accession>
<accession>Q6ZMC2</accession>
<reference key="1">
    <citation type="journal article" date="2000" name="Proc. Natl. Acad. Sci. U.S.A.">
        <title>Gene expression profiling in the human hypothalamus-pituitary-adrenal axis and full-length cDNA cloning.</title>
        <authorList>
            <person name="Hu R.-M."/>
            <person name="Han Z.-G."/>
            <person name="Song H.-D."/>
            <person name="Peng Y.-D."/>
            <person name="Huang Q.-H."/>
            <person name="Ren S.-X."/>
            <person name="Gu Y.-J."/>
            <person name="Huang C.-H."/>
            <person name="Li Y.-B."/>
            <person name="Jiang C.-L."/>
            <person name="Fu G."/>
            <person name="Zhang Q.-H."/>
            <person name="Gu B.-W."/>
            <person name="Dai M."/>
            <person name="Mao Y.-F."/>
            <person name="Gao G.-F."/>
            <person name="Rong R."/>
            <person name="Ye M."/>
            <person name="Zhou J."/>
            <person name="Xu S.-H."/>
            <person name="Gu J."/>
            <person name="Shi J.-X."/>
            <person name="Jin W.-R."/>
            <person name="Zhang C.-K."/>
            <person name="Wu T.-M."/>
            <person name="Huang G.-Y."/>
            <person name="Chen Z."/>
            <person name="Chen M.-D."/>
            <person name="Chen J.-L."/>
        </authorList>
    </citation>
    <scope>NUCLEOTIDE SEQUENCE [LARGE SCALE MRNA] (ISOFORM 1)</scope>
    <source>
        <tissue>Adrenal gland</tissue>
    </source>
</reference>
<reference key="2">
    <citation type="journal article" date="2004" name="Nat. Genet.">
        <title>Complete sequencing and characterization of 21,243 full-length human cDNAs.</title>
        <authorList>
            <person name="Ota T."/>
            <person name="Suzuki Y."/>
            <person name="Nishikawa T."/>
            <person name="Otsuki T."/>
            <person name="Sugiyama T."/>
            <person name="Irie R."/>
            <person name="Wakamatsu A."/>
            <person name="Hayashi K."/>
            <person name="Sato H."/>
            <person name="Nagai K."/>
            <person name="Kimura K."/>
            <person name="Makita H."/>
            <person name="Sekine M."/>
            <person name="Obayashi M."/>
            <person name="Nishi T."/>
            <person name="Shibahara T."/>
            <person name="Tanaka T."/>
            <person name="Ishii S."/>
            <person name="Yamamoto J."/>
            <person name="Saito K."/>
            <person name="Kawai Y."/>
            <person name="Isono Y."/>
            <person name="Nakamura Y."/>
            <person name="Nagahari K."/>
            <person name="Murakami K."/>
            <person name="Yasuda T."/>
            <person name="Iwayanagi T."/>
            <person name="Wagatsuma M."/>
            <person name="Shiratori A."/>
            <person name="Sudo H."/>
            <person name="Hosoiri T."/>
            <person name="Kaku Y."/>
            <person name="Kodaira H."/>
            <person name="Kondo H."/>
            <person name="Sugawara M."/>
            <person name="Takahashi M."/>
            <person name="Kanda K."/>
            <person name="Yokoi T."/>
            <person name="Furuya T."/>
            <person name="Kikkawa E."/>
            <person name="Omura Y."/>
            <person name="Abe K."/>
            <person name="Kamihara K."/>
            <person name="Katsuta N."/>
            <person name="Sato K."/>
            <person name="Tanikawa M."/>
            <person name="Yamazaki M."/>
            <person name="Ninomiya K."/>
            <person name="Ishibashi T."/>
            <person name="Yamashita H."/>
            <person name="Murakawa K."/>
            <person name="Fujimori K."/>
            <person name="Tanai H."/>
            <person name="Kimata M."/>
            <person name="Watanabe M."/>
            <person name="Hiraoka S."/>
            <person name="Chiba Y."/>
            <person name="Ishida S."/>
            <person name="Ono Y."/>
            <person name="Takiguchi S."/>
            <person name="Watanabe S."/>
            <person name="Yosida M."/>
            <person name="Hotuta T."/>
            <person name="Kusano J."/>
            <person name="Kanehori K."/>
            <person name="Takahashi-Fujii A."/>
            <person name="Hara H."/>
            <person name="Tanase T.-O."/>
            <person name="Nomura Y."/>
            <person name="Togiya S."/>
            <person name="Komai F."/>
            <person name="Hara R."/>
            <person name="Takeuchi K."/>
            <person name="Arita M."/>
            <person name="Imose N."/>
            <person name="Musashino K."/>
            <person name="Yuuki H."/>
            <person name="Oshima A."/>
            <person name="Sasaki N."/>
            <person name="Aotsuka S."/>
            <person name="Yoshikawa Y."/>
            <person name="Matsunawa H."/>
            <person name="Ichihara T."/>
            <person name="Shiohata N."/>
            <person name="Sano S."/>
            <person name="Moriya S."/>
            <person name="Momiyama H."/>
            <person name="Satoh N."/>
            <person name="Takami S."/>
            <person name="Terashima Y."/>
            <person name="Suzuki O."/>
            <person name="Nakagawa S."/>
            <person name="Senoh A."/>
            <person name="Mizoguchi H."/>
            <person name="Goto Y."/>
            <person name="Shimizu F."/>
            <person name="Wakebe H."/>
            <person name="Hishigaki H."/>
            <person name="Watanabe T."/>
            <person name="Sugiyama A."/>
            <person name="Takemoto M."/>
            <person name="Kawakami B."/>
            <person name="Yamazaki M."/>
            <person name="Watanabe K."/>
            <person name="Kumagai A."/>
            <person name="Itakura S."/>
            <person name="Fukuzumi Y."/>
            <person name="Fujimori Y."/>
            <person name="Komiyama M."/>
            <person name="Tashiro H."/>
            <person name="Tanigami A."/>
            <person name="Fujiwara T."/>
            <person name="Ono T."/>
            <person name="Yamada K."/>
            <person name="Fujii Y."/>
            <person name="Ozaki K."/>
            <person name="Hirao M."/>
            <person name="Ohmori Y."/>
            <person name="Kawabata A."/>
            <person name="Hikiji T."/>
            <person name="Kobatake N."/>
            <person name="Inagaki H."/>
            <person name="Ikema Y."/>
            <person name="Okamoto S."/>
            <person name="Okitani R."/>
            <person name="Kawakami T."/>
            <person name="Noguchi S."/>
            <person name="Itoh T."/>
            <person name="Shigeta K."/>
            <person name="Senba T."/>
            <person name="Matsumura K."/>
            <person name="Nakajima Y."/>
            <person name="Mizuno T."/>
            <person name="Morinaga M."/>
            <person name="Sasaki M."/>
            <person name="Togashi T."/>
            <person name="Oyama M."/>
            <person name="Hata H."/>
            <person name="Watanabe M."/>
            <person name="Komatsu T."/>
            <person name="Mizushima-Sugano J."/>
            <person name="Satoh T."/>
            <person name="Shirai Y."/>
            <person name="Takahashi Y."/>
            <person name="Nakagawa K."/>
            <person name="Okumura K."/>
            <person name="Nagase T."/>
            <person name="Nomura N."/>
            <person name="Kikuchi H."/>
            <person name="Masuho Y."/>
            <person name="Yamashita R."/>
            <person name="Nakai K."/>
            <person name="Yada T."/>
            <person name="Nakamura Y."/>
            <person name="Ohara O."/>
            <person name="Isogai T."/>
            <person name="Sugano S."/>
        </authorList>
    </citation>
    <scope>NUCLEOTIDE SEQUENCE [LARGE SCALE MRNA] (ISOFORM 1)</scope>
    <source>
        <tissue>Brain</tissue>
        <tissue>Stomach cancer</tissue>
    </source>
</reference>
<reference key="3">
    <citation type="submission" date="2005-04" db="EMBL/GenBank/DDBJ databases">
        <authorList>
            <person name="Suzuki Y."/>
            <person name="Sugano S."/>
            <person name="Totoki Y."/>
            <person name="Toyoda A."/>
            <person name="Takeda T."/>
            <person name="Sakaki Y."/>
            <person name="Tanaka A."/>
            <person name="Yokoyama S."/>
        </authorList>
    </citation>
    <scope>NUCLEOTIDE SEQUENCE [LARGE SCALE MRNA] (ISOFORM 2)</scope>
    <source>
        <tissue>Small intestine</tissue>
    </source>
</reference>
<reference key="4">
    <citation type="submission" date="2005-07" db="EMBL/GenBank/DDBJ databases">
        <authorList>
            <person name="Mural R.J."/>
            <person name="Istrail S."/>
            <person name="Sutton G.G."/>
            <person name="Florea L."/>
            <person name="Halpern A.L."/>
            <person name="Mobarry C.M."/>
            <person name="Lippert R."/>
            <person name="Walenz B."/>
            <person name="Shatkay H."/>
            <person name="Dew I."/>
            <person name="Miller J.R."/>
            <person name="Flanigan M.J."/>
            <person name="Edwards N.J."/>
            <person name="Bolanos R."/>
            <person name="Fasulo D."/>
            <person name="Halldorsson B.V."/>
            <person name="Hannenhalli S."/>
            <person name="Turner R."/>
            <person name="Yooseph S."/>
            <person name="Lu F."/>
            <person name="Nusskern D.R."/>
            <person name="Shue B.C."/>
            <person name="Zheng X.H."/>
            <person name="Zhong F."/>
            <person name="Delcher A.L."/>
            <person name="Huson D.H."/>
            <person name="Kravitz S.A."/>
            <person name="Mouchard L."/>
            <person name="Reinert K."/>
            <person name="Remington K.A."/>
            <person name="Clark A.G."/>
            <person name="Waterman M.S."/>
            <person name="Eichler E.E."/>
            <person name="Adams M.D."/>
            <person name="Hunkapiller M.W."/>
            <person name="Myers E.W."/>
            <person name="Venter J.C."/>
        </authorList>
    </citation>
    <scope>NUCLEOTIDE SEQUENCE [LARGE SCALE GENOMIC DNA]</scope>
</reference>
<reference key="5">
    <citation type="journal article" date="2004" name="Genome Res.">
        <title>The status, quality, and expansion of the NIH full-length cDNA project: the Mammalian Gene Collection (MGC).</title>
        <authorList>
            <consortium name="The MGC Project Team"/>
        </authorList>
    </citation>
    <scope>NUCLEOTIDE SEQUENCE [LARGE SCALE MRNA] (ISOFORM 1)</scope>
    <source>
        <tissue>Brain</tissue>
    </source>
</reference>
<reference key="6">
    <citation type="submission" date="2005-06" db="UniProtKB">
        <authorList>
            <person name="Bienvenut W.V."/>
        </authorList>
    </citation>
    <scope>PROTEIN SEQUENCE OF 2-13; 140-147 AND 181-197</scope>
    <scope>CLEAVAGE OF INITIATOR METHIONINE</scope>
    <scope>IDENTIFICATION BY MASS SPECTROMETRY</scope>
    <source>
        <tissue>B-cell lymphoma</tissue>
    </source>
</reference>
<reference key="7">
    <citation type="journal article" date="2011" name="BMC Syst. Biol.">
        <title>Initial characterization of the human central proteome.</title>
        <authorList>
            <person name="Burkard T.R."/>
            <person name="Planyavsky M."/>
            <person name="Kaupe I."/>
            <person name="Breitwieser F.P."/>
            <person name="Buerckstuemmer T."/>
            <person name="Bennett K.L."/>
            <person name="Superti-Furga G."/>
            <person name="Colinge J."/>
        </authorList>
    </citation>
    <scope>IDENTIFICATION BY MASS SPECTROMETRY [LARGE SCALE ANALYSIS]</scope>
</reference>
<reference key="8">
    <citation type="journal article" date="2012" name="Nat. Cell Biol.">
        <title>Defining human ERAD networks through an integrative mapping strategy.</title>
        <authorList>
            <person name="Christianson J.C."/>
            <person name="Olzmann J.A."/>
            <person name="Shaler T.A."/>
            <person name="Sowa M.E."/>
            <person name="Bennett E.J."/>
            <person name="Richter C.M."/>
            <person name="Tyler R.E."/>
            <person name="Greenblatt E.J."/>
            <person name="Harper J.W."/>
            <person name="Kopito R.R."/>
        </authorList>
    </citation>
    <scope>IDENTIFICATION IN THE EMC COMPLEX</scope>
    <scope>SUBCELLULAR LOCATION</scope>
</reference>
<reference key="9">
    <citation type="journal article" date="2012" name="Proc. Natl. Acad. Sci. U.S.A.">
        <title>N-terminal acetylome analyses and functional insights of the N-terminal acetyltransferase NatB.</title>
        <authorList>
            <person name="Van Damme P."/>
            <person name="Lasa M."/>
            <person name="Polevoda B."/>
            <person name="Gazquez C."/>
            <person name="Elosegui-Artola A."/>
            <person name="Kim D.S."/>
            <person name="De Juan-Pardo E."/>
            <person name="Demeyer K."/>
            <person name="Hole K."/>
            <person name="Larrea E."/>
            <person name="Timmerman E."/>
            <person name="Prieto J."/>
            <person name="Arnesen T."/>
            <person name="Sherman F."/>
            <person name="Gevaert K."/>
            <person name="Aldabe R."/>
        </authorList>
    </citation>
    <scope>IDENTIFICATION BY MASS SPECTROMETRY [LARGE SCALE ANALYSIS]</scope>
</reference>
<reference key="10">
    <citation type="journal article" date="2014" name="J. Proteomics">
        <title>An enzyme assisted RP-RPLC approach for in-depth analysis of human liver phosphoproteome.</title>
        <authorList>
            <person name="Bian Y."/>
            <person name="Song C."/>
            <person name="Cheng K."/>
            <person name="Dong M."/>
            <person name="Wang F."/>
            <person name="Huang J."/>
            <person name="Sun D."/>
            <person name="Wang L."/>
            <person name="Ye M."/>
            <person name="Zou H."/>
        </authorList>
    </citation>
    <scope>IDENTIFICATION BY MASS SPECTROMETRY [LARGE SCALE ANALYSIS]</scope>
    <source>
        <tissue>Liver</tissue>
    </source>
</reference>
<reference key="11">
    <citation type="journal article" date="2018" name="Cell">
        <title>EMC Is Required to Initiate Accurate Membrane Protein Topogenesis.</title>
        <authorList>
            <person name="Chitwood P.J."/>
            <person name="Juszkiewicz S."/>
            <person name="Guna A."/>
            <person name="Shao S."/>
            <person name="Hegde R.S."/>
        </authorList>
    </citation>
    <scope>FUNCTION</scope>
</reference>
<reference key="12">
    <citation type="journal article" date="2018" name="Elife">
        <title>The ER membrane protein complex interacts cotranslationally to enable biogenesis of multipass membrane proteins.</title>
        <authorList>
            <person name="Shurtleff M.J."/>
            <person name="Itzhak D.N."/>
            <person name="Hussmann J.A."/>
            <person name="Schirle Oakdale N.T."/>
            <person name="Costa E.A."/>
            <person name="Jonikas M."/>
            <person name="Weibezahn J."/>
            <person name="Popova K.D."/>
            <person name="Jan C.H."/>
            <person name="Sinitcyn P."/>
            <person name="Vembar S.S."/>
            <person name="Hernandez H."/>
            <person name="Cox J."/>
            <person name="Burlingame A.L."/>
            <person name="Brodsky J.L."/>
            <person name="Frost A."/>
            <person name="Borner G.H."/>
            <person name="Weissman J.S."/>
        </authorList>
    </citation>
    <scope>FUNCTION</scope>
    <scope>SUBUNIT</scope>
</reference>
<reference key="13">
    <citation type="journal article" date="2018" name="Science">
        <title>The ER membrane protein complex is a transmembrane domain insertase.</title>
        <authorList>
            <person name="Guna A."/>
            <person name="Volkmar N."/>
            <person name="Christianson J.C."/>
            <person name="Hegde R.S."/>
        </authorList>
    </citation>
    <scope>FUNCTION</scope>
    <scope>SUBUNIT</scope>
</reference>
<reference evidence="11" key="14">
    <citation type="journal article" date="2020" name="Elife">
        <title>The architecture of EMC reveals a path for membrane protein insertion.</title>
        <authorList>
            <person name="O'Donnell J.P."/>
            <person name="Phillips B.P."/>
            <person name="Yagita Y."/>
            <person name="Juszkiewicz S."/>
            <person name="Wagner A."/>
            <person name="Malinverni D."/>
            <person name="Keenan R.J."/>
            <person name="Miller E.A."/>
            <person name="Hegde R.S."/>
        </authorList>
    </citation>
    <scope>STRUCTURE BY ELECTRON MICROSCOPY (6.40 ANGSTROMS) OF THE EMC COMPLEX</scope>
    <scope>FUNCTION</scope>
</reference>
<reference evidence="10" key="15">
    <citation type="journal article" date="2020" name="Science">
        <title>Structural basis for membrane insertion by the human ER membrane protein complex.</title>
        <authorList>
            <person name="Pleiner T."/>
            <person name="Tomaleri G.P."/>
            <person name="Januszyk K."/>
            <person name="Inglis A.J."/>
            <person name="Hazu M."/>
            <person name="Voorhees R.M."/>
        </authorList>
    </citation>
    <scope>STRUCTURE BY ELECTRON MICROSCOPY (3.40 ANGSTROMS) OF THE EMC COMPLEX</scope>
    <scope>FUNCTION</scope>
    <scope>TOPOLOGY</scope>
    <scope>MUTAGENESIS OF ARG-31; MET-101; MET-106; MET-110; MET-111; PHE-173 AND ARG-180</scope>
</reference>
<sequence length="261" mass="29952">MAGPELLLDSNIRLWVVLPIVIITFFVGMIRHYVSILLQSDKKLTQEQVSDSQVLIRSRVLRENGKYIPKQSFLTRKYYFNNPEDGFFKKTKRKVVPPSPMTDPTMLTDMMKGNVTNVLPMILIGGWINMTFSGFVTTKVPFPLTLRFKPMLQQGIELLTLDASWVSSASWYFLNVFGLRSIYSLILGQDNAADQSRMMQEQMTGAAMAMPADTNKAFKTEWEALELTDHQWALDDVEEELMAKDLHFEGMFKKELQTSIF</sequence>
<organism>
    <name type="scientific">Homo sapiens</name>
    <name type="common">Human</name>
    <dbReference type="NCBI Taxonomy" id="9606"/>
    <lineage>
        <taxon>Eukaryota</taxon>
        <taxon>Metazoa</taxon>
        <taxon>Chordata</taxon>
        <taxon>Craniata</taxon>
        <taxon>Vertebrata</taxon>
        <taxon>Euteleostomi</taxon>
        <taxon>Mammalia</taxon>
        <taxon>Eutheria</taxon>
        <taxon>Euarchontoglires</taxon>
        <taxon>Primates</taxon>
        <taxon>Haplorrhini</taxon>
        <taxon>Catarrhini</taxon>
        <taxon>Hominidae</taxon>
        <taxon>Homo</taxon>
    </lineage>
</organism>
<protein>
    <recommendedName>
        <fullName>ER membrane protein complex subunit 3</fullName>
    </recommendedName>
    <alternativeName>
        <fullName>Transmembrane protein 111</fullName>
    </alternativeName>
</protein>
<comment type="function">
    <text evidence="2 3 4 5 6 9">Part of the endoplasmic reticulum membrane protein complex (EMC) that enables the energy-independent insertion into endoplasmic reticulum membranes of newly synthesized membrane proteins (PubMed:29242231, PubMed:29809151, PubMed:30415835, PubMed:32439656, PubMed:32459176). Preferentially accommodates proteins with transmembrane domains that are weakly hydrophobic or contain destabilizing features such as charged and aromatic residues (PubMed:29242231, PubMed:29809151, PubMed:30415835). Involved in the cotranslational insertion of multi-pass membrane proteins in which stop-transfer membrane-anchor sequences become ER membrane spanning helices (PubMed:29809151, PubMed:30415835). It is also required for the post-translational insertion of tail-anchored/TA proteins in endoplasmic reticulum membranes (PubMed:29242231, PubMed:29809151). By mediating the proper cotranslational insertion of N-terminal transmembrane domains in an N-exo topology, with translocated N-terminus in the lumen of the ER, controls the topology of multi-pass membrane proteins like the G protein-coupled receptors (PubMed:30415835). By regulating the insertion of various proteins in membranes, it is indirectly involved in many cellular processes (Probable).</text>
</comment>
<comment type="subunit">
    <text evidence="1 2 3 5 6">Component of the ER membrane protein complex (EMC).</text>
</comment>
<comment type="interaction">
    <interactant intactId="EBI-1054670">
        <id>Q9P0I2</id>
    </interactant>
    <interactant intactId="EBI-359031">
        <id>Q15006</id>
        <label>EMC2</label>
    </interactant>
    <organismsDiffer>false</organismsDiffer>
    <experiments>11</experiments>
</comment>
<comment type="interaction">
    <interactant intactId="EBI-1054670">
        <id>Q9P0I2</id>
    </interactant>
    <interactant intactId="EBI-2547776">
        <id>Q13126</id>
        <label>MTAP</label>
    </interactant>
    <organismsDiffer>false</organismsDiffer>
    <experiments>3</experiments>
</comment>
<comment type="subcellular location">
    <subcellularLocation>
        <location evidence="1">Endoplasmic reticulum membrane</location>
        <topology evidence="5">Multi-pass membrane protein</topology>
    </subcellularLocation>
</comment>
<comment type="alternative products">
    <event type="alternative splicing"/>
    <isoform>
        <id>Q9P0I2-1</id>
        <name>1</name>
        <sequence type="displayed"/>
    </isoform>
    <isoform>
        <id>Q9P0I2-2</id>
        <name>2</name>
        <sequence type="described" ref="VSP_014886"/>
    </isoform>
</comment>
<comment type="similarity">
    <text evidence="9">Belongs to the EMC3 family.</text>
</comment>
<comment type="sequence caution" evidence="9">
    <conflict type="erroneous termination">
        <sequence resource="EMBL-CDS" id="BAD18807"/>
    </conflict>
    <text>Truncated C-terminus.</text>
</comment>
<dbReference type="EMBL" id="AF157321">
    <property type="protein sequence ID" value="AAF67487.1"/>
    <property type="molecule type" value="mRNA"/>
</dbReference>
<dbReference type="EMBL" id="AK172843">
    <property type="protein sequence ID" value="BAD18807.1"/>
    <property type="status" value="ALT_SEQ"/>
    <property type="molecule type" value="mRNA"/>
</dbReference>
<dbReference type="EMBL" id="AK222953">
    <property type="protein sequence ID" value="BAD96673.1"/>
    <property type="molecule type" value="mRNA"/>
</dbReference>
<dbReference type="EMBL" id="AK312008">
    <property type="protein sequence ID" value="BAG34946.1"/>
    <property type="molecule type" value="mRNA"/>
</dbReference>
<dbReference type="EMBL" id="CH471055">
    <property type="protein sequence ID" value="EAW64047.1"/>
    <property type="molecule type" value="Genomic_DNA"/>
</dbReference>
<dbReference type="EMBL" id="BC022807">
    <property type="protein sequence ID" value="AAH22807.1"/>
    <property type="molecule type" value="mRNA"/>
</dbReference>
<dbReference type="CCDS" id="CCDS2594.1">
    <molecule id="Q9P0I2-1"/>
</dbReference>
<dbReference type="RefSeq" id="NP_001381603.1">
    <molecule id="Q9P0I2-1"/>
    <property type="nucleotide sequence ID" value="NM_001394674.1"/>
</dbReference>
<dbReference type="RefSeq" id="NP_060917.1">
    <molecule id="Q9P0I2-1"/>
    <property type="nucleotide sequence ID" value="NM_018447.4"/>
</dbReference>
<dbReference type="PDB" id="6WW7">
    <property type="method" value="EM"/>
    <property type="resolution" value="3.40 A"/>
    <property type="chains" value="C=1-261"/>
</dbReference>
<dbReference type="PDB" id="6Z3W">
    <property type="method" value="EM"/>
    <property type="resolution" value="6.40 A"/>
    <property type="chains" value="C=1-261"/>
</dbReference>
<dbReference type="PDB" id="7ADO">
    <property type="method" value="EM"/>
    <property type="resolution" value="3.39 A"/>
    <property type="chains" value="C=1-261"/>
</dbReference>
<dbReference type="PDB" id="7ADP">
    <property type="method" value="EM"/>
    <property type="resolution" value="3.60 A"/>
    <property type="chains" value="C=1-261"/>
</dbReference>
<dbReference type="PDB" id="8EOI">
    <property type="method" value="EM"/>
    <property type="resolution" value="3.40 A"/>
    <property type="chains" value="C=4-261"/>
</dbReference>
<dbReference type="PDB" id="8J0N">
    <property type="method" value="EM"/>
    <property type="resolution" value="3.47 A"/>
    <property type="chains" value="C=1-261"/>
</dbReference>
<dbReference type="PDB" id="8J0O">
    <property type="method" value="EM"/>
    <property type="resolution" value="3.32 A"/>
    <property type="chains" value="C=1-261"/>
</dbReference>
<dbReference type="PDB" id="8S9S">
    <property type="method" value="EM"/>
    <property type="resolution" value="3.60 A"/>
    <property type="chains" value="3=1-261"/>
</dbReference>
<dbReference type="PDB" id="9C7V">
    <property type="method" value="EM"/>
    <property type="resolution" value="6.60 A"/>
    <property type="chains" value="3=1-261"/>
</dbReference>
<dbReference type="PDBsum" id="6WW7"/>
<dbReference type="PDBsum" id="6Z3W"/>
<dbReference type="PDBsum" id="7ADO"/>
<dbReference type="PDBsum" id="7ADP"/>
<dbReference type="PDBsum" id="8EOI"/>
<dbReference type="PDBsum" id="8J0N"/>
<dbReference type="PDBsum" id="8J0O"/>
<dbReference type="PDBsum" id="8S9S"/>
<dbReference type="PDBsum" id="9C7V"/>
<dbReference type="EMDB" id="EMD-11732"/>
<dbReference type="EMDB" id="EMD-11733"/>
<dbReference type="EMDB" id="EMD-21929"/>
<dbReference type="EMDB" id="EMD-28376"/>
<dbReference type="EMDB" id="EMD-35906"/>
<dbReference type="EMDB" id="EMD-35907"/>
<dbReference type="EMDB" id="EMD-40245"/>
<dbReference type="EMDB" id="EMD-40246"/>
<dbReference type="EMDB" id="EMD-45295"/>
<dbReference type="SMR" id="Q9P0I2"/>
<dbReference type="BioGRID" id="120936">
    <property type="interactions" value="134"/>
</dbReference>
<dbReference type="ComplexPortal" id="CPX-5848">
    <property type="entry name" value="Endoplasmic reticulum membrane complex, EMC8 variant"/>
</dbReference>
<dbReference type="ComplexPortal" id="CPX-5881">
    <property type="entry name" value="Endoplasmic reticulum membrane complex, EMC9 variant"/>
</dbReference>
<dbReference type="CORUM" id="Q9P0I2"/>
<dbReference type="FunCoup" id="Q9P0I2">
    <property type="interactions" value="1854"/>
</dbReference>
<dbReference type="IntAct" id="Q9P0I2">
    <property type="interactions" value="74"/>
</dbReference>
<dbReference type="MINT" id="Q9P0I2"/>
<dbReference type="STRING" id="9606.ENSP00000245046"/>
<dbReference type="TCDB" id="3.A.27.1.1">
    <property type="family name" value="the endoplasmic reticulum membrane protein insertion complex (emc) family"/>
</dbReference>
<dbReference type="iPTMnet" id="Q9P0I2"/>
<dbReference type="MetOSite" id="Q9P0I2"/>
<dbReference type="PhosphoSitePlus" id="Q9P0I2"/>
<dbReference type="BioMuta" id="EMC3"/>
<dbReference type="DMDM" id="71153383"/>
<dbReference type="jPOST" id="Q9P0I2"/>
<dbReference type="MassIVE" id="Q9P0I2"/>
<dbReference type="PaxDb" id="9606-ENSP00000245046"/>
<dbReference type="PeptideAtlas" id="Q9P0I2"/>
<dbReference type="ProteomicsDB" id="83550">
    <molecule id="Q9P0I2-1"/>
</dbReference>
<dbReference type="ProteomicsDB" id="83551">
    <molecule id="Q9P0I2-2"/>
</dbReference>
<dbReference type="Pumba" id="Q9P0I2"/>
<dbReference type="TopDownProteomics" id="Q9P0I2-1">
    <molecule id="Q9P0I2-1"/>
</dbReference>
<dbReference type="TopDownProteomics" id="Q9P0I2-2">
    <molecule id="Q9P0I2-2"/>
</dbReference>
<dbReference type="Antibodypedia" id="49265">
    <property type="antibodies" value="60 antibodies from 15 providers"/>
</dbReference>
<dbReference type="DNASU" id="55831"/>
<dbReference type="Ensembl" id="ENST00000245046.7">
    <molecule id="Q9P0I2-1"/>
    <property type="protein sequence ID" value="ENSP00000245046.2"/>
    <property type="gene ID" value="ENSG00000125037.13"/>
</dbReference>
<dbReference type="Ensembl" id="ENST00000470827.3">
    <molecule id="Q9P0I2-1"/>
    <property type="protein sequence ID" value="ENSP00000474771.2"/>
    <property type="gene ID" value="ENSG00000125037.13"/>
</dbReference>
<dbReference type="GeneID" id="55831"/>
<dbReference type="KEGG" id="hsa:55831"/>
<dbReference type="MANE-Select" id="ENST00000245046.7">
    <property type="protein sequence ID" value="ENSP00000245046.2"/>
    <property type="RefSeq nucleotide sequence ID" value="NM_001394674.1"/>
    <property type="RefSeq protein sequence ID" value="NP_001381603.1"/>
</dbReference>
<dbReference type="UCSC" id="uc003bun.4">
    <molecule id="Q9P0I2-1"/>
    <property type="organism name" value="human"/>
</dbReference>
<dbReference type="AGR" id="HGNC:23999"/>
<dbReference type="CTD" id="55831"/>
<dbReference type="DisGeNET" id="55831"/>
<dbReference type="GeneCards" id="EMC3"/>
<dbReference type="HGNC" id="HGNC:23999">
    <property type="gene designation" value="EMC3"/>
</dbReference>
<dbReference type="HPA" id="ENSG00000125037">
    <property type="expression patterns" value="Low tissue specificity"/>
</dbReference>
<dbReference type="MIM" id="620273">
    <property type="type" value="gene"/>
</dbReference>
<dbReference type="neXtProt" id="NX_Q9P0I2"/>
<dbReference type="OpenTargets" id="ENSG00000125037"/>
<dbReference type="PharmGKB" id="PA142670762"/>
<dbReference type="VEuPathDB" id="HostDB:ENSG00000125037"/>
<dbReference type="eggNOG" id="KOG3188">
    <property type="taxonomic scope" value="Eukaryota"/>
</dbReference>
<dbReference type="GeneTree" id="ENSGT00390000005780"/>
<dbReference type="HOGENOM" id="CLU_060791_0_0_1"/>
<dbReference type="InParanoid" id="Q9P0I2"/>
<dbReference type="OMA" id="DSINMID"/>
<dbReference type="OrthoDB" id="6745403at2759"/>
<dbReference type="PAN-GO" id="Q9P0I2">
    <property type="GO annotations" value="1 GO annotation based on evolutionary models"/>
</dbReference>
<dbReference type="PhylomeDB" id="Q9P0I2"/>
<dbReference type="PathwayCommons" id="Q9P0I2"/>
<dbReference type="Reactome" id="R-HSA-8980692">
    <property type="pathway name" value="RHOA GTPase cycle"/>
</dbReference>
<dbReference type="SignaLink" id="Q9P0I2"/>
<dbReference type="BioGRID-ORCS" id="55831">
    <property type="hits" value="510 hits in 1170 CRISPR screens"/>
</dbReference>
<dbReference type="ChiTaRS" id="EMC3">
    <property type="organism name" value="human"/>
</dbReference>
<dbReference type="GenomeRNAi" id="55831"/>
<dbReference type="Pharos" id="Q9P0I2">
    <property type="development level" value="Tbio"/>
</dbReference>
<dbReference type="PRO" id="PR:Q9P0I2"/>
<dbReference type="Proteomes" id="UP000005640">
    <property type="component" value="Chromosome 3"/>
</dbReference>
<dbReference type="RNAct" id="Q9P0I2">
    <property type="molecule type" value="protein"/>
</dbReference>
<dbReference type="Bgee" id="ENSG00000125037">
    <property type="expression patterns" value="Expressed in triceps brachii and 207 other cell types or tissues"/>
</dbReference>
<dbReference type="ExpressionAtlas" id="Q9P0I2">
    <property type="expression patterns" value="baseline and differential"/>
</dbReference>
<dbReference type="GO" id="GO:0072546">
    <property type="term" value="C:EMC complex"/>
    <property type="evidence" value="ECO:0000314"/>
    <property type="project" value="UniProtKB"/>
</dbReference>
<dbReference type="GO" id="GO:0005789">
    <property type="term" value="C:endoplasmic reticulum membrane"/>
    <property type="evidence" value="ECO:0000314"/>
    <property type="project" value="UniProtKB"/>
</dbReference>
<dbReference type="GO" id="GO:0016020">
    <property type="term" value="C:membrane"/>
    <property type="evidence" value="ECO:0000314"/>
    <property type="project" value="UniProtKB"/>
</dbReference>
<dbReference type="GO" id="GO:0045050">
    <property type="term" value="P:protein insertion into ER membrane by stop-transfer membrane-anchor sequence"/>
    <property type="evidence" value="ECO:0000314"/>
    <property type="project" value="ComplexPortal"/>
</dbReference>
<dbReference type="GO" id="GO:0071816">
    <property type="term" value="P:tail-anchored membrane protein insertion into ER membrane"/>
    <property type="evidence" value="ECO:0000314"/>
    <property type="project" value="UniProtKB"/>
</dbReference>
<dbReference type="InterPro" id="IPR008568">
    <property type="entry name" value="EMC3"/>
</dbReference>
<dbReference type="InterPro" id="IPR002809">
    <property type="entry name" value="EMC3/TMCO1"/>
</dbReference>
<dbReference type="PANTHER" id="PTHR13116">
    <property type="entry name" value="ER MEMBRANE PROTEIN COMPLEX SUBUNIT 3"/>
    <property type="match status" value="1"/>
</dbReference>
<dbReference type="PANTHER" id="PTHR13116:SF10">
    <property type="entry name" value="ER MEMBRANE PROTEIN COMPLEX SUBUNIT 3"/>
    <property type="match status" value="1"/>
</dbReference>
<dbReference type="Pfam" id="PF01956">
    <property type="entry name" value="EMC3_TMCO1"/>
    <property type="match status" value="1"/>
</dbReference>
<dbReference type="PIRSF" id="PIRSF010045">
    <property type="entry name" value="DUF850_TM_euk"/>
    <property type="match status" value="1"/>
</dbReference>
<dbReference type="SMART" id="SM01415">
    <property type="entry name" value="DUF106"/>
    <property type="match status" value="1"/>
</dbReference>